<comment type="function">
    <text evidence="1">Catalyzes the interconversion of 2-phosphoglycerate and 3-phosphoglycerate.</text>
</comment>
<comment type="catalytic activity">
    <reaction evidence="1">
        <text>(2R)-2-phosphoglycerate = (2R)-3-phosphoglycerate</text>
        <dbReference type="Rhea" id="RHEA:15901"/>
        <dbReference type="ChEBI" id="CHEBI:58272"/>
        <dbReference type="ChEBI" id="CHEBI:58289"/>
        <dbReference type="EC" id="5.4.2.11"/>
    </reaction>
</comment>
<comment type="pathway">
    <text evidence="1">Carbohydrate degradation; glycolysis; pyruvate from D-glyceraldehyde 3-phosphate: step 3/5.</text>
</comment>
<comment type="similarity">
    <text evidence="1">Belongs to the phosphoglycerate mutase family. BPG-dependent PGAM subfamily.</text>
</comment>
<name>GPMA_STRPB</name>
<feature type="chain" id="PRO_1000064105" description="2,3-bisphosphoglycerate-dependent phosphoglycerate mutase">
    <location>
        <begin position="1"/>
        <end position="231"/>
    </location>
</feature>
<feature type="active site" description="Tele-phosphohistidine intermediate" evidence="1">
    <location>
        <position position="9"/>
    </location>
</feature>
<feature type="active site" description="Proton donor/acceptor" evidence="1">
    <location>
        <position position="87"/>
    </location>
</feature>
<feature type="binding site" evidence="1">
    <location>
        <begin position="8"/>
        <end position="15"/>
    </location>
    <ligand>
        <name>substrate</name>
    </ligand>
</feature>
<feature type="binding site" evidence="1">
    <location>
        <begin position="21"/>
        <end position="22"/>
    </location>
    <ligand>
        <name>substrate</name>
    </ligand>
</feature>
<feature type="binding site" evidence="1">
    <location>
        <position position="60"/>
    </location>
    <ligand>
        <name>substrate</name>
    </ligand>
</feature>
<feature type="binding site" evidence="1">
    <location>
        <begin position="87"/>
        <end position="90"/>
    </location>
    <ligand>
        <name>substrate</name>
    </ligand>
</feature>
<feature type="binding site" evidence="1">
    <location>
        <position position="98"/>
    </location>
    <ligand>
        <name>substrate</name>
    </ligand>
</feature>
<feature type="binding site" evidence="1">
    <location>
        <begin position="114"/>
        <end position="115"/>
    </location>
    <ligand>
        <name>substrate</name>
    </ligand>
</feature>
<feature type="binding site" evidence="1">
    <location>
        <begin position="183"/>
        <end position="184"/>
    </location>
    <ligand>
        <name>substrate</name>
    </ligand>
</feature>
<feature type="site" description="Transition state stabilizer" evidence="1">
    <location>
        <position position="182"/>
    </location>
</feature>
<proteinExistence type="inferred from homology"/>
<accession>Q1JAX0</accession>
<keyword id="KW-0312">Gluconeogenesis</keyword>
<keyword id="KW-0324">Glycolysis</keyword>
<keyword id="KW-0413">Isomerase</keyword>
<reference key="1">
    <citation type="journal article" date="2006" name="Proc. Natl. Acad. Sci. U.S.A.">
        <title>Molecular genetic anatomy of inter- and intraserotype variation in the human bacterial pathogen group A Streptococcus.</title>
        <authorList>
            <person name="Beres S.B."/>
            <person name="Richter E.W."/>
            <person name="Nagiec M.J."/>
            <person name="Sumby P."/>
            <person name="Porcella S.F."/>
            <person name="DeLeo F.R."/>
            <person name="Musser J.M."/>
        </authorList>
    </citation>
    <scope>NUCLEOTIDE SEQUENCE [LARGE SCALE GENOMIC DNA]</scope>
    <source>
        <strain>MGAS2096</strain>
    </source>
</reference>
<evidence type="ECO:0000255" key="1">
    <source>
        <dbReference type="HAMAP-Rule" id="MF_01039"/>
    </source>
</evidence>
<sequence length="231" mass="26036">MVKLVFARHGESEWNKANLFTGWADVDLSEKGTQQAIDAGKLIKEAGIEFDLAFTSVLTRAIKTTNLALENAGQLWVPTEKSWRLNERHYGALTGKNKAEAAEQFGDEQVHIWRRSYDVLPPAMAKDDEYSAHKDRRYADLDPALIPDAENLKVTLERAMPYWEEKIAPALLDGKNVFVGAHGNSIRALVKHIKGLSDDEIMDVEIPNFPPLVFELDEKLNIVKEYYLGGE</sequence>
<dbReference type="EC" id="5.4.2.11" evidence="1"/>
<dbReference type="EMBL" id="CP000261">
    <property type="protein sequence ID" value="ABF36288.1"/>
    <property type="molecule type" value="Genomic_DNA"/>
</dbReference>
<dbReference type="SMR" id="Q1JAX0"/>
<dbReference type="KEGG" id="spj:MGAS2096_Spy1236"/>
<dbReference type="HOGENOM" id="CLU_033323_1_5_9"/>
<dbReference type="UniPathway" id="UPA00109">
    <property type="reaction ID" value="UER00186"/>
</dbReference>
<dbReference type="GO" id="GO:0004619">
    <property type="term" value="F:phosphoglycerate mutase activity"/>
    <property type="evidence" value="ECO:0007669"/>
    <property type="project" value="UniProtKB-EC"/>
</dbReference>
<dbReference type="GO" id="GO:0006094">
    <property type="term" value="P:gluconeogenesis"/>
    <property type="evidence" value="ECO:0007669"/>
    <property type="project" value="UniProtKB-UniRule"/>
</dbReference>
<dbReference type="GO" id="GO:0006096">
    <property type="term" value="P:glycolytic process"/>
    <property type="evidence" value="ECO:0007669"/>
    <property type="project" value="UniProtKB-UniRule"/>
</dbReference>
<dbReference type="CDD" id="cd07067">
    <property type="entry name" value="HP_PGM_like"/>
    <property type="match status" value="1"/>
</dbReference>
<dbReference type="FunFam" id="3.40.50.1240:FF:000003">
    <property type="entry name" value="2,3-bisphosphoglycerate-dependent phosphoglycerate mutase"/>
    <property type="match status" value="1"/>
</dbReference>
<dbReference type="Gene3D" id="3.40.50.1240">
    <property type="entry name" value="Phosphoglycerate mutase-like"/>
    <property type="match status" value="1"/>
</dbReference>
<dbReference type="HAMAP" id="MF_01039">
    <property type="entry name" value="PGAM_GpmA"/>
    <property type="match status" value="1"/>
</dbReference>
<dbReference type="InterPro" id="IPR013078">
    <property type="entry name" value="His_Pase_superF_clade-1"/>
</dbReference>
<dbReference type="InterPro" id="IPR029033">
    <property type="entry name" value="His_PPase_superfam"/>
</dbReference>
<dbReference type="InterPro" id="IPR005952">
    <property type="entry name" value="Phosphogly_mut1"/>
</dbReference>
<dbReference type="NCBIfam" id="TIGR01258">
    <property type="entry name" value="pgm_1"/>
    <property type="match status" value="1"/>
</dbReference>
<dbReference type="NCBIfam" id="NF010713">
    <property type="entry name" value="PRK14115.1"/>
    <property type="match status" value="1"/>
</dbReference>
<dbReference type="NCBIfam" id="NF010715">
    <property type="entry name" value="PRK14117.1"/>
    <property type="match status" value="1"/>
</dbReference>
<dbReference type="PANTHER" id="PTHR11931">
    <property type="entry name" value="PHOSPHOGLYCERATE MUTASE"/>
    <property type="match status" value="1"/>
</dbReference>
<dbReference type="Pfam" id="PF00300">
    <property type="entry name" value="His_Phos_1"/>
    <property type="match status" value="1"/>
</dbReference>
<dbReference type="PIRSF" id="PIRSF000709">
    <property type="entry name" value="6PFK_2-Ptase"/>
    <property type="match status" value="1"/>
</dbReference>
<dbReference type="SMART" id="SM00855">
    <property type="entry name" value="PGAM"/>
    <property type="match status" value="1"/>
</dbReference>
<dbReference type="SUPFAM" id="SSF53254">
    <property type="entry name" value="Phosphoglycerate mutase-like"/>
    <property type="match status" value="1"/>
</dbReference>
<gene>
    <name evidence="1" type="primary">gpmA</name>
    <name type="ordered locus">MGAS2096_Spy1236</name>
</gene>
<protein>
    <recommendedName>
        <fullName evidence="1">2,3-bisphosphoglycerate-dependent phosphoglycerate mutase</fullName>
        <shortName evidence="1">BPG-dependent PGAM</shortName>
        <shortName evidence="1">PGAM</shortName>
        <shortName evidence="1">Phosphoglyceromutase</shortName>
        <shortName evidence="1">dPGM</shortName>
        <ecNumber evidence="1">5.4.2.11</ecNumber>
    </recommendedName>
</protein>
<organism>
    <name type="scientific">Streptococcus pyogenes serotype M12 (strain MGAS2096)</name>
    <dbReference type="NCBI Taxonomy" id="370553"/>
    <lineage>
        <taxon>Bacteria</taxon>
        <taxon>Bacillati</taxon>
        <taxon>Bacillota</taxon>
        <taxon>Bacilli</taxon>
        <taxon>Lactobacillales</taxon>
        <taxon>Streptococcaceae</taxon>
        <taxon>Streptococcus</taxon>
    </lineage>
</organism>